<accession>Q8GW80</accession>
<accession>Q9LX50</accession>
<keyword id="KW-0433">Leucine-rich repeat</keyword>
<keyword id="KW-1185">Reference proteome</keyword>
<keyword id="KW-0677">Repeat</keyword>
<sequence>MDDCSKDIINCLPDNLLCQILSNLSTKEAALTSLLSKRWRYLFALVPNLDFDVLPSLHPEVAMQDQDQTSFIDFVDRVLKLRGKDHINKFSLKCGDGIEDEDVFPWILNTLRHGVSDLSLHVSPSLVYWLPSKVFASKTLVRLKIGPKDGPRVKLRNVCLPKLKTLNLDSVVFEEGKIGFAKLLSGCPVLEELSLLNLAWDRWDSCSVSSKILKRLTLYCAHSSRNPKSVSFDTPNVVYFEYSDNIANKYPKVNFDSLVEASIGIRMTKVQKANARYVSDVDEETEMVGNATDLLMGICNVKTLYLSYDTLETLNLCCQVIPVFNNLTHLTIESHPELGWESLPNLLKSCPNLGTLVFQGLLHKATDRCGDVCMCQGLENSHSCLSSSPVKCLKILKFGETNDDDDMEIEMEQIKNFLEKMPNLEQLIIYYESSIDNDLVRVSSQLQEVPTVASLKCKIQVISDNLSLSSTLPISLSMENGFHL</sequence>
<dbReference type="EMBL" id="AL356014">
    <property type="protein sequence ID" value="CAB91591.1"/>
    <property type="status" value="ALT_SEQ"/>
    <property type="molecule type" value="Genomic_DNA"/>
</dbReference>
<dbReference type="EMBL" id="CP002686">
    <property type="protein sequence ID" value="AEE79889.1"/>
    <property type="molecule type" value="Genomic_DNA"/>
</dbReference>
<dbReference type="EMBL" id="CP002686">
    <property type="protein sequence ID" value="AEE79890.1"/>
    <property type="molecule type" value="Genomic_DNA"/>
</dbReference>
<dbReference type="EMBL" id="CP002686">
    <property type="protein sequence ID" value="AEE79891.1"/>
    <property type="molecule type" value="Genomic_DNA"/>
</dbReference>
<dbReference type="EMBL" id="CP002686">
    <property type="protein sequence ID" value="AEE79892.1"/>
    <property type="molecule type" value="Genomic_DNA"/>
</dbReference>
<dbReference type="EMBL" id="CP002686">
    <property type="protein sequence ID" value="ANM65848.1"/>
    <property type="molecule type" value="Genomic_DNA"/>
</dbReference>
<dbReference type="EMBL" id="AK119022">
    <property type="protein sequence ID" value="BAC43598.1"/>
    <property type="molecule type" value="mRNA"/>
</dbReference>
<dbReference type="PIR" id="T48989">
    <property type="entry name" value="T48989"/>
</dbReference>
<dbReference type="RefSeq" id="NP_001190132.1">
    <property type="nucleotide sequence ID" value="NM_001203203.2"/>
</dbReference>
<dbReference type="RefSeq" id="NP_001190133.1">
    <property type="nucleotide sequence ID" value="NM_001203204.2"/>
</dbReference>
<dbReference type="RefSeq" id="NP_001190134.1">
    <property type="nucleotide sequence ID" value="NM_001203205.1"/>
</dbReference>
<dbReference type="RefSeq" id="NP_001319796.1">
    <property type="nucleotide sequence ID" value="NM_001339954.1"/>
</dbReference>
<dbReference type="RefSeq" id="NP_191480.2">
    <property type="nucleotide sequence ID" value="NM_115783.3"/>
</dbReference>
<dbReference type="BioGRID" id="10405">
    <property type="interactions" value="3"/>
</dbReference>
<dbReference type="FunCoup" id="Q8GW80">
    <property type="interactions" value="139"/>
</dbReference>
<dbReference type="STRING" id="3702.Q8GW80"/>
<dbReference type="PaxDb" id="3702-AT3G59210.1"/>
<dbReference type="ProteomicsDB" id="222577"/>
<dbReference type="EnsemblPlants" id="AT3G59210.1">
    <property type="protein sequence ID" value="AT3G59210.1"/>
    <property type="gene ID" value="AT3G59210"/>
</dbReference>
<dbReference type="EnsemblPlants" id="AT3G59210.2">
    <property type="protein sequence ID" value="AT3G59210.2"/>
    <property type="gene ID" value="AT3G59210"/>
</dbReference>
<dbReference type="EnsemblPlants" id="AT3G59210.3">
    <property type="protein sequence ID" value="AT3G59210.3"/>
    <property type="gene ID" value="AT3G59210"/>
</dbReference>
<dbReference type="EnsemblPlants" id="AT3G59210.4">
    <property type="protein sequence ID" value="AT3G59210.4"/>
    <property type="gene ID" value="AT3G59210"/>
</dbReference>
<dbReference type="EnsemblPlants" id="AT3G59210.5">
    <property type="protein sequence ID" value="AT3G59210.5"/>
    <property type="gene ID" value="AT3G59210"/>
</dbReference>
<dbReference type="GeneID" id="825090"/>
<dbReference type="Gramene" id="AT3G59210.1">
    <property type="protein sequence ID" value="AT3G59210.1"/>
    <property type="gene ID" value="AT3G59210"/>
</dbReference>
<dbReference type="Gramene" id="AT3G59210.2">
    <property type="protein sequence ID" value="AT3G59210.2"/>
    <property type="gene ID" value="AT3G59210"/>
</dbReference>
<dbReference type="Gramene" id="AT3G59210.3">
    <property type="protein sequence ID" value="AT3G59210.3"/>
    <property type="gene ID" value="AT3G59210"/>
</dbReference>
<dbReference type="Gramene" id="AT3G59210.4">
    <property type="protein sequence ID" value="AT3G59210.4"/>
    <property type="gene ID" value="AT3G59210"/>
</dbReference>
<dbReference type="Gramene" id="AT3G59210.5">
    <property type="protein sequence ID" value="AT3G59210.5"/>
    <property type="gene ID" value="AT3G59210"/>
</dbReference>
<dbReference type="KEGG" id="ath:AT3G59210"/>
<dbReference type="Araport" id="AT3G59210"/>
<dbReference type="TAIR" id="AT3G59210"/>
<dbReference type="HOGENOM" id="CLU_010721_7_4_1"/>
<dbReference type="InParanoid" id="Q8GW80"/>
<dbReference type="OMA" id="LPCHLRF"/>
<dbReference type="OrthoDB" id="612216at2759"/>
<dbReference type="PhylomeDB" id="Q8GW80"/>
<dbReference type="PRO" id="PR:Q8GW80"/>
<dbReference type="Proteomes" id="UP000006548">
    <property type="component" value="Chromosome 3"/>
</dbReference>
<dbReference type="ExpressionAtlas" id="Q8GW80">
    <property type="expression patterns" value="baseline and differential"/>
</dbReference>
<dbReference type="CDD" id="cd22160">
    <property type="entry name" value="F-box_AtFBL13-like"/>
    <property type="match status" value="1"/>
</dbReference>
<dbReference type="Gene3D" id="1.20.1280.50">
    <property type="match status" value="1"/>
</dbReference>
<dbReference type="Gene3D" id="3.80.10.10">
    <property type="entry name" value="Ribonuclease Inhibitor"/>
    <property type="match status" value="1"/>
</dbReference>
<dbReference type="InterPro" id="IPR036047">
    <property type="entry name" value="F-box-like_dom_sf"/>
</dbReference>
<dbReference type="InterPro" id="IPR053781">
    <property type="entry name" value="F-box_AtFBL13-like"/>
</dbReference>
<dbReference type="InterPro" id="IPR001810">
    <property type="entry name" value="F-box_dom"/>
</dbReference>
<dbReference type="InterPro" id="IPR006566">
    <property type="entry name" value="FBD"/>
</dbReference>
<dbReference type="InterPro" id="IPR055294">
    <property type="entry name" value="FBL60-like"/>
</dbReference>
<dbReference type="InterPro" id="IPR032675">
    <property type="entry name" value="LRR_dom_sf"/>
</dbReference>
<dbReference type="InterPro" id="IPR055411">
    <property type="entry name" value="LRR_FXL15/At3g58940/PEG3-like"/>
</dbReference>
<dbReference type="PANTHER" id="PTHR31293">
    <property type="entry name" value="RNI-LIKE SUPERFAMILY PROTEIN"/>
    <property type="match status" value="1"/>
</dbReference>
<dbReference type="PANTHER" id="PTHR31293:SF12">
    <property type="entry name" value="RNI-LIKE SUPERFAMILY PROTEIN"/>
    <property type="match status" value="1"/>
</dbReference>
<dbReference type="Pfam" id="PF00646">
    <property type="entry name" value="F-box"/>
    <property type="match status" value="1"/>
</dbReference>
<dbReference type="Pfam" id="PF24758">
    <property type="entry name" value="LRR_At5g56370"/>
    <property type="match status" value="1"/>
</dbReference>
<dbReference type="SMART" id="SM00579">
    <property type="entry name" value="FBD"/>
    <property type="match status" value="1"/>
</dbReference>
<dbReference type="SMART" id="SM00256">
    <property type="entry name" value="FBOX"/>
    <property type="match status" value="1"/>
</dbReference>
<dbReference type="SUPFAM" id="SSF81383">
    <property type="entry name" value="F-box domain"/>
    <property type="match status" value="1"/>
</dbReference>
<dbReference type="SUPFAM" id="SSF52047">
    <property type="entry name" value="RNI-like"/>
    <property type="match status" value="1"/>
</dbReference>
<dbReference type="PROSITE" id="PS50181">
    <property type="entry name" value="FBOX"/>
    <property type="match status" value="1"/>
</dbReference>
<proteinExistence type="evidence at transcript level"/>
<feature type="chain" id="PRO_0000281965" description="F-box/LRR-repeat protein At3g59210">
    <location>
        <begin position="1"/>
        <end position="484"/>
    </location>
</feature>
<feature type="domain" description="F-box" evidence="1">
    <location>
        <begin position="6"/>
        <end position="54"/>
    </location>
</feature>
<feature type="repeat" description="LRR 1">
    <location>
        <begin position="144"/>
        <end position="170"/>
    </location>
</feature>
<feature type="repeat" description="LRR 2">
    <location>
        <begin position="172"/>
        <end position="197"/>
    </location>
</feature>
<feature type="repeat" description="LRR 3">
    <location>
        <begin position="205"/>
        <end position="234"/>
    </location>
</feature>
<feature type="repeat" description="LRR 4">
    <location>
        <begin position="303"/>
        <end position="334"/>
    </location>
</feature>
<feature type="repeat" description="LRR 5">
    <location>
        <begin position="335"/>
        <end position="360"/>
    </location>
</feature>
<evidence type="ECO:0000255" key="1">
    <source>
        <dbReference type="PROSITE-ProRule" id="PRU00080"/>
    </source>
</evidence>
<evidence type="ECO:0000305" key="2"/>
<organism>
    <name type="scientific">Arabidopsis thaliana</name>
    <name type="common">Mouse-ear cress</name>
    <dbReference type="NCBI Taxonomy" id="3702"/>
    <lineage>
        <taxon>Eukaryota</taxon>
        <taxon>Viridiplantae</taxon>
        <taxon>Streptophyta</taxon>
        <taxon>Embryophyta</taxon>
        <taxon>Tracheophyta</taxon>
        <taxon>Spermatophyta</taxon>
        <taxon>Magnoliopsida</taxon>
        <taxon>eudicotyledons</taxon>
        <taxon>Gunneridae</taxon>
        <taxon>Pentapetalae</taxon>
        <taxon>rosids</taxon>
        <taxon>malvids</taxon>
        <taxon>Brassicales</taxon>
        <taxon>Brassicaceae</taxon>
        <taxon>Camelineae</taxon>
        <taxon>Arabidopsis</taxon>
    </lineage>
</organism>
<protein>
    <recommendedName>
        <fullName>F-box/LRR-repeat protein At3g59210</fullName>
    </recommendedName>
</protein>
<comment type="sequence caution" evidence="2">
    <conflict type="erroneous gene model prediction">
        <sequence resource="EMBL-CDS" id="CAB91591"/>
    </conflict>
</comment>
<gene>
    <name type="ordered locus">At3g59210</name>
    <name type="ORF">F25L23.70</name>
</gene>
<reference key="1">
    <citation type="journal article" date="2000" name="Nature">
        <title>Sequence and analysis of chromosome 3 of the plant Arabidopsis thaliana.</title>
        <authorList>
            <person name="Salanoubat M."/>
            <person name="Lemcke K."/>
            <person name="Rieger M."/>
            <person name="Ansorge W."/>
            <person name="Unseld M."/>
            <person name="Fartmann B."/>
            <person name="Valle G."/>
            <person name="Bloecker H."/>
            <person name="Perez-Alonso M."/>
            <person name="Obermaier B."/>
            <person name="Delseny M."/>
            <person name="Boutry M."/>
            <person name="Grivell L.A."/>
            <person name="Mache R."/>
            <person name="Puigdomenech P."/>
            <person name="De Simone V."/>
            <person name="Choisne N."/>
            <person name="Artiguenave F."/>
            <person name="Robert C."/>
            <person name="Brottier P."/>
            <person name="Wincker P."/>
            <person name="Cattolico L."/>
            <person name="Weissenbach J."/>
            <person name="Saurin W."/>
            <person name="Quetier F."/>
            <person name="Schaefer M."/>
            <person name="Mueller-Auer S."/>
            <person name="Gabel C."/>
            <person name="Fuchs M."/>
            <person name="Benes V."/>
            <person name="Wurmbach E."/>
            <person name="Drzonek H."/>
            <person name="Erfle H."/>
            <person name="Jordan N."/>
            <person name="Bangert S."/>
            <person name="Wiedelmann R."/>
            <person name="Kranz H."/>
            <person name="Voss H."/>
            <person name="Holland R."/>
            <person name="Brandt P."/>
            <person name="Nyakatura G."/>
            <person name="Vezzi A."/>
            <person name="D'Angelo M."/>
            <person name="Pallavicini A."/>
            <person name="Toppo S."/>
            <person name="Simionati B."/>
            <person name="Conrad A."/>
            <person name="Hornischer K."/>
            <person name="Kauer G."/>
            <person name="Loehnert T.-H."/>
            <person name="Nordsiek G."/>
            <person name="Reichelt J."/>
            <person name="Scharfe M."/>
            <person name="Schoen O."/>
            <person name="Bargues M."/>
            <person name="Terol J."/>
            <person name="Climent J."/>
            <person name="Navarro P."/>
            <person name="Collado C."/>
            <person name="Perez-Perez A."/>
            <person name="Ottenwaelder B."/>
            <person name="Duchemin D."/>
            <person name="Cooke R."/>
            <person name="Laudie M."/>
            <person name="Berger-Llauro C."/>
            <person name="Purnelle B."/>
            <person name="Masuy D."/>
            <person name="de Haan M."/>
            <person name="Maarse A.C."/>
            <person name="Alcaraz J.-P."/>
            <person name="Cottet A."/>
            <person name="Casacuberta E."/>
            <person name="Monfort A."/>
            <person name="Argiriou A."/>
            <person name="Flores M."/>
            <person name="Liguori R."/>
            <person name="Vitale D."/>
            <person name="Mannhaupt G."/>
            <person name="Haase D."/>
            <person name="Schoof H."/>
            <person name="Rudd S."/>
            <person name="Zaccaria P."/>
            <person name="Mewes H.-W."/>
            <person name="Mayer K.F.X."/>
            <person name="Kaul S."/>
            <person name="Town C.D."/>
            <person name="Koo H.L."/>
            <person name="Tallon L.J."/>
            <person name="Jenkins J."/>
            <person name="Rooney T."/>
            <person name="Rizzo M."/>
            <person name="Walts A."/>
            <person name="Utterback T."/>
            <person name="Fujii C.Y."/>
            <person name="Shea T.P."/>
            <person name="Creasy T.H."/>
            <person name="Haas B."/>
            <person name="Maiti R."/>
            <person name="Wu D."/>
            <person name="Peterson J."/>
            <person name="Van Aken S."/>
            <person name="Pai G."/>
            <person name="Militscher J."/>
            <person name="Sellers P."/>
            <person name="Gill J.E."/>
            <person name="Feldblyum T.V."/>
            <person name="Preuss D."/>
            <person name="Lin X."/>
            <person name="Nierman W.C."/>
            <person name="Salzberg S.L."/>
            <person name="White O."/>
            <person name="Venter J.C."/>
            <person name="Fraser C.M."/>
            <person name="Kaneko T."/>
            <person name="Nakamura Y."/>
            <person name="Sato S."/>
            <person name="Kato T."/>
            <person name="Asamizu E."/>
            <person name="Sasamoto S."/>
            <person name="Kimura T."/>
            <person name="Idesawa K."/>
            <person name="Kawashima K."/>
            <person name="Kishida Y."/>
            <person name="Kiyokawa C."/>
            <person name="Kohara M."/>
            <person name="Matsumoto M."/>
            <person name="Matsuno A."/>
            <person name="Muraki A."/>
            <person name="Nakayama S."/>
            <person name="Nakazaki N."/>
            <person name="Shinpo S."/>
            <person name="Takeuchi C."/>
            <person name="Wada T."/>
            <person name="Watanabe A."/>
            <person name="Yamada M."/>
            <person name="Yasuda M."/>
            <person name="Tabata S."/>
        </authorList>
    </citation>
    <scope>NUCLEOTIDE SEQUENCE [LARGE SCALE GENOMIC DNA]</scope>
    <source>
        <strain>cv. Columbia</strain>
    </source>
</reference>
<reference key="2">
    <citation type="journal article" date="2017" name="Plant J.">
        <title>Araport11: a complete reannotation of the Arabidopsis thaliana reference genome.</title>
        <authorList>
            <person name="Cheng C.Y."/>
            <person name="Krishnakumar V."/>
            <person name="Chan A.P."/>
            <person name="Thibaud-Nissen F."/>
            <person name="Schobel S."/>
            <person name="Town C.D."/>
        </authorList>
    </citation>
    <scope>GENOME REANNOTATION</scope>
    <source>
        <strain>cv. Columbia</strain>
    </source>
</reference>
<reference key="3">
    <citation type="journal article" date="2002" name="Science">
        <title>Functional annotation of a full-length Arabidopsis cDNA collection.</title>
        <authorList>
            <person name="Seki M."/>
            <person name="Narusaka M."/>
            <person name="Kamiya A."/>
            <person name="Ishida J."/>
            <person name="Satou M."/>
            <person name="Sakurai T."/>
            <person name="Nakajima M."/>
            <person name="Enju A."/>
            <person name="Akiyama K."/>
            <person name="Oono Y."/>
            <person name="Muramatsu M."/>
            <person name="Hayashizaki Y."/>
            <person name="Kawai J."/>
            <person name="Carninci P."/>
            <person name="Itoh M."/>
            <person name="Ishii Y."/>
            <person name="Arakawa T."/>
            <person name="Shibata K."/>
            <person name="Shinagawa A."/>
            <person name="Shinozaki K."/>
        </authorList>
    </citation>
    <scope>NUCLEOTIDE SEQUENCE [LARGE SCALE MRNA]</scope>
    <source>
        <strain>cv. Columbia</strain>
    </source>
</reference>
<name>FBL65_ARATH</name>